<name>FHI1A_HUMAN</name>
<sequence>MMSSVSTESKLQQAVSLQGVDPETCMIVFKNHWAQVVKILEKHDPLKNTQAKYGSIPPDEASAVQNYVEHMLFLLIEEQAKDAAMGPILEFVVSENIMEKLFLWSLRREFTDETKIEQLKMYEMLVTQSHQPLLHHKPILKPLMMLLSSCSGTTTPTVEEKLVVLLNQLCSILAKDPSILELFFHTSEDQGAANFLIFSLLIPFIHREGSVGQQARDALLFIMSLSAENTMVAHHIVENTYFCPVLATGLSGLYSSLPTKLEEKGEEWHCLLKDDWLLLPSLVQFMNSLEFCNAVIQVAHPLIRNQLVNYIYNGFLVPVLAPALHKVTVEEVMTTTAYLDLFLRSISEPALLEIFLRFILLHQHENVHILDTLTSRINTPFRLCVVSLALFRTLIGLHCEDVMLQLVLRYLIPCNHMMLSQRWAVKERDCYSVSAAKLLALTPVCCSSGITLTLGNQERDYILWSKCMHDTSGPVERPFPEAFSESACIVEYGKALDISYLQYLWEAHTNILRCMRDCRVWSALYDGDSPDPEMFLQSLTEEGSVSSACPVFGLPQQLPRKTGPQLAPRKDKSQTELEWDDSYDTGISSGADVGSPGPYDDLEVSGPPAPIDPPKHIQEMKKNALLLFKGSYIEESDFQDDVMVYRLCAEKDSEDMKDSQEEAARPPAEAQAEVQSVPINNGPLLSTQPETDSEEEWNRDNSDPFHSEPKEPKQEREPEAAPESNSELASPAPEAEHSSNLTAAHPESEELIAQYDQIIKELDSGAEGLMEQNYPTPDPLLLTKEEEGKEESKGEKEKEGKKELEDEEDDFDSFIAEMPAVETVPSPFVGRDEAAFASRHPVRTQSTPFTGPFISVVLSKLENMLENSLHVNLLLIGIITQLASYPQPLLRSFLLNTNMVFQPSVRSLYQVLASVKNKIEQFASVERDFPGLLIQAQQYLLFRVDMSDMTPAALTKDPIQEASRTGSGKNLLDGPPRVLQPFLTHRTKVAEAPPNLPLPVRNPMLAAALFPEFLKELAALAQEHSILCYKILGDFEDSCC</sequence>
<gene>
    <name evidence="6" type="primary">FHIP1A</name>
    <name type="synonym">FAM160A1</name>
</gene>
<dbReference type="EMBL" id="AC092611">
    <property type="status" value="NOT_ANNOTATED_CDS"/>
    <property type="molecule type" value="Genomic_DNA"/>
</dbReference>
<dbReference type="EMBL" id="AC097455">
    <property type="status" value="NOT_ANNOTATED_CDS"/>
    <property type="molecule type" value="Genomic_DNA"/>
</dbReference>
<dbReference type="EMBL" id="AK125363">
    <property type="protein sequence ID" value="BAC86147.1"/>
    <property type="status" value="ALT_SEQ"/>
    <property type="molecule type" value="mRNA"/>
</dbReference>
<dbReference type="EMBL" id="BC014937">
    <property type="protein sequence ID" value="AAH14937.1"/>
    <property type="status" value="ALT_SEQ"/>
    <property type="molecule type" value="mRNA"/>
</dbReference>
<dbReference type="CCDS" id="CCDS47146.1"/>
<dbReference type="RefSeq" id="NP_001103447.1">
    <property type="nucleotide sequence ID" value="NM_001109977.3"/>
</dbReference>
<dbReference type="RefSeq" id="NP_001335623.1">
    <property type="nucleotide sequence ID" value="NM_001348694.2"/>
</dbReference>
<dbReference type="RefSeq" id="XP_005263256.1">
    <property type="nucleotide sequence ID" value="XM_005263199.2"/>
</dbReference>
<dbReference type="RefSeq" id="XP_011530522.1">
    <property type="nucleotide sequence ID" value="XM_011532220.3"/>
</dbReference>
<dbReference type="RefSeq" id="XP_011530523.1">
    <property type="nucleotide sequence ID" value="XM_011532221.3"/>
</dbReference>
<dbReference type="RefSeq" id="XP_011530525.1">
    <property type="nucleotide sequence ID" value="XM_011532223.3"/>
</dbReference>
<dbReference type="RefSeq" id="XP_011530526.1">
    <property type="nucleotide sequence ID" value="XM_011532224.3"/>
</dbReference>
<dbReference type="RefSeq" id="XP_024309969.1">
    <property type="nucleotide sequence ID" value="XM_024454201.2"/>
</dbReference>
<dbReference type="RefSeq" id="XP_047272083.1">
    <property type="nucleotide sequence ID" value="XM_047416127.1"/>
</dbReference>
<dbReference type="RefSeq" id="XP_054206755.1">
    <property type="nucleotide sequence ID" value="XM_054350780.1"/>
</dbReference>
<dbReference type="RefSeq" id="XP_054206756.1">
    <property type="nucleotide sequence ID" value="XM_054350781.1"/>
</dbReference>
<dbReference type="RefSeq" id="XP_054206757.1">
    <property type="nucleotide sequence ID" value="XM_054350782.1"/>
</dbReference>
<dbReference type="RefSeq" id="XP_054206758.1">
    <property type="nucleotide sequence ID" value="XM_054350783.1"/>
</dbReference>
<dbReference type="RefSeq" id="XP_054206759.1">
    <property type="nucleotide sequence ID" value="XM_054350784.1"/>
</dbReference>
<dbReference type="RefSeq" id="XP_054206760.1">
    <property type="nucleotide sequence ID" value="XM_054350785.1"/>
</dbReference>
<dbReference type="RefSeq" id="XP_054206761.1">
    <property type="nucleotide sequence ID" value="XM_054350786.1"/>
</dbReference>
<dbReference type="SMR" id="Q05DH4"/>
<dbReference type="BioGRID" id="610225">
    <property type="interactions" value="33"/>
</dbReference>
<dbReference type="ComplexPortal" id="CPX-2353">
    <property type="entry name" value="FTS-Hook-FHIP cargo adaptor complex, FHIP1A-HOOK1/3 variant"/>
</dbReference>
<dbReference type="FunCoup" id="Q05DH4">
    <property type="interactions" value="586"/>
</dbReference>
<dbReference type="IntAct" id="Q05DH4">
    <property type="interactions" value="135"/>
</dbReference>
<dbReference type="STRING" id="9606.ENSP00000413196"/>
<dbReference type="iPTMnet" id="Q05DH4"/>
<dbReference type="PhosphoSitePlus" id="Q05DH4"/>
<dbReference type="BioMuta" id="FAM160A1"/>
<dbReference type="DMDM" id="189042274"/>
<dbReference type="jPOST" id="Q05DH4"/>
<dbReference type="MassIVE" id="Q05DH4"/>
<dbReference type="PaxDb" id="9606-ENSP00000413196"/>
<dbReference type="PeptideAtlas" id="Q05DH4"/>
<dbReference type="ProteomicsDB" id="58407"/>
<dbReference type="Pumba" id="Q05DH4"/>
<dbReference type="Antibodypedia" id="48311">
    <property type="antibodies" value="8 antibodies from 7 providers"/>
</dbReference>
<dbReference type="DNASU" id="729830"/>
<dbReference type="Ensembl" id="ENST00000435205.6">
    <property type="protein sequence ID" value="ENSP00000413196.1"/>
    <property type="gene ID" value="ENSG00000164142.16"/>
</dbReference>
<dbReference type="Ensembl" id="ENST00000505231.1">
    <property type="protein sequence ID" value="ENSP00000421580.1"/>
    <property type="gene ID" value="ENSG00000164142.16"/>
</dbReference>
<dbReference type="GeneID" id="729830"/>
<dbReference type="KEGG" id="hsa:729830"/>
<dbReference type="MANE-Select" id="ENST00000435205.6">
    <property type="protein sequence ID" value="ENSP00000413196.1"/>
    <property type="RefSeq nucleotide sequence ID" value="NM_001109977.3"/>
    <property type="RefSeq protein sequence ID" value="NP_001103447.1"/>
</dbReference>
<dbReference type="UCSC" id="uc003imj.2">
    <property type="organism name" value="human"/>
</dbReference>
<dbReference type="AGR" id="HGNC:34237"/>
<dbReference type="CTD" id="729830"/>
<dbReference type="DisGeNET" id="729830"/>
<dbReference type="GeneCards" id="FHIP1A"/>
<dbReference type="HGNC" id="HGNC:34237">
    <property type="gene designation" value="FHIP1A"/>
</dbReference>
<dbReference type="HPA" id="ENSG00000164142">
    <property type="expression patterns" value="Tissue enhanced (skeletal)"/>
</dbReference>
<dbReference type="neXtProt" id="NX_Q05DH4"/>
<dbReference type="OpenTargets" id="ENSG00000164142"/>
<dbReference type="VEuPathDB" id="HostDB:ENSG00000164142"/>
<dbReference type="eggNOG" id="KOG3695">
    <property type="taxonomic scope" value="Eukaryota"/>
</dbReference>
<dbReference type="GeneTree" id="ENSGT00950000182936"/>
<dbReference type="HOGENOM" id="CLU_007807_0_0_1"/>
<dbReference type="InParanoid" id="Q05DH4"/>
<dbReference type="OMA" id="RMPSLVQ"/>
<dbReference type="OrthoDB" id="9181at9604"/>
<dbReference type="PAN-GO" id="Q05DH4">
    <property type="GO annotations" value="0 GO annotations based on evolutionary models"/>
</dbReference>
<dbReference type="PhylomeDB" id="Q05DH4"/>
<dbReference type="TreeFam" id="TF313941"/>
<dbReference type="PathwayCommons" id="Q05DH4"/>
<dbReference type="SignaLink" id="Q05DH4"/>
<dbReference type="BioGRID-ORCS" id="729830">
    <property type="hits" value="11 hits in 1143 CRISPR screens"/>
</dbReference>
<dbReference type="ChiTaRS" id="FAM160A1">
    <property type="organism name" value="human"/>
</dbReference>
<dbReference type="GenomeRNAi" id="729830"/>
<dbReference type="Pharos" id="Q05DH4">
    <property type="development level" value="Tdark"/>
</dbReference>
<dbReference type="PRO" id="PR:Q05DH4"/>
<dbReference type="Proteomes" id="UP000005640">
    <property type="component" value="Chromosome 4"/>
</dbReference>
<dbReference type="RNAct" id="Q05DH4">
    <property type="molecule type" value="protein"/>
</dbReference>
<dbReference type="Bgee" id="ENSG00000164142">
    <property type="expression patterns" value="Expressed in buccal mucosa cell and 162 other cell types or tissues"/>
</dbReference>
<dbReference type="ExpressionAtlas" id="Q05DH4">
    <property type="expression patterns" value="baseline and differential"/>
</dbReference>
<dbReference type="GO" id="GO:1905719">
    <property type="term" value="P:protein localization to perinuclear region of cytoplasm"/>
    <property type="evidence" value="ECO:0000315"/>
    <property type="project" value="UniProtKB"/>
</dbReference>
<dbReference type="InterPro" id="IPR019384">
    <property type="entry name" value="FHIP"/>
</dbReference>
<dbReference type="InterPro" id="IPR045669">
    <property type="entry name" value="FHIP_C"/>
</dbReference>
<dbReference type="InterPro" id="IPR045668">
    <property type="entry name" value="FHIP_KELAA_motif"/>
</dbReference>
<dbReference type="PANTHER" id="PTHR21705:SF6">
    <property type="entry name" value="FHF COMPLEX SUBUNIT HOOK-INTERACTING PROTEIN 1A"/>
    <property type="match status" value="1"/>
</dbReference>
<dbReference type="PANTHER" id="PTHR21705">
    <property type="entry name" value="RAI16 PROTEIN-RELATED"/>
    <property type="match status" value="1"/>
</dbReference>
<dbReference type="Pfam" id="PF19314">
    <property type="entry name" value="DUF5917"/>
    <property type="match status" value="1"/>
</dbReference>
<dbReference type="Pfam" id="PF19311">
    <property type="entry name" value="KELAA"/>
    <property type="match status" value="1"/>
</dbReference>
<dbReference type="Pfam" id="PF10257">
    <property type="entry name" value="RAI16-like"/>
    <property type="match status" value="1"/>
</dbReference>
<proteinExistence type="evidence at protein level"/>
<evidence type="ECO:0000256" key="1">
    <source>
        <dbReference type="SAM" id="MobiDB-lite"/>
    </source>
</evidence>
<evidence type="ECO:0000269" key="2">
    <source>
    </source>
</evidence>
<evidence type="ECO:0000269" key="3">
    <source>
    </source>
</evidence>
<evidence type="ECO:0000303" key="4">
    <source>
    </source>
</evidence>
<evidence type="ECO:0000305" key="5"/>
<evidence type="ECO:0000312" key="6">
    <source>
        <dbReference type="HGNC" id="HGNC:34237"/>
    </source>
</evidence>
<accession>Q05DH4</accession>
<accession>Q6ZUS2</accession>
<comment type="function">
    <text evidence="3">Probable component of the FTS/Hook/FHIP complex (FHF complex) (PubMed:32073997). FHF complex promotes the distribution of AP-4 complex to the perinuclear area of the cell (PubMed:32073997).</text>
</comment>
<comment type="subunit">
    <text evidence="3">May be a component of the FTS/Hook/FHIP complex (FHF complex), composed of AKTIP/FTS, FHIP1B, and one or more members of the Hook family of proteins HOOK1, HOOK2, and HOOK3. May interact directly with AKTIP/FTS.</text>
</comment>
<comment type="interaction">
    <interactant intactId="EBI-21303726">
        <id>Q05DH4</id>
    </interactant>
    <interactant intactId="EBI-711399">
        <id>Q9H8T0</id>
        <label>AKTIP</label>
    </interactant>
    <organismsDiffer>false</organismsDiffer>
    <experiments>5</experiments>
</comment>
<comment type="similarity">
    <text evidence="5">Belongs to the FHIP family.</text>
</comment>
<comment type="sequence caution" evidence="5">
    <conflict type="erroneous initiation">
        <sequence resource="EMBL-CDS" id="AAH14937"/>
    </conflict>
    <text>Truncated N-terminus.</text>
</comment>
<comment type="sequence caution" evidence="5">
    <conflict type="miscellaneous discrepancy">
        <sequence resource="EMBL-CDS" id="AAH14937"/>
    </conflict>
    <text>Contaminating sequence. Potential poly-A sequence.</text>
</comment>
<comment type="sequence caution" evidence="5">
    <conflict type="frameshift">
        <sequence resource="EMBL-CDS" id="BAC86147"/>
    </conflict>
</comment>
<comment type="sequence caution" evidence="5">
    <conflict type="miscellaneous discrepancy">
        <sequence resource="EMBL-CDS" id="BAC86147"/>
    </conflict>
    <text>Aberrant splicing.</text>
</comment>
<keyword id="KW-1267">Proteomics identification</keyword>
<keyword id="KW-1185">Reference proteome</keyword>
<protein>
    <recommendedName>
        <fullName evidence="5">FHF complex subunit HOOK-interacting protein 1A</fullName>
        <shortName evidence="5">FHIP1A</shortName>
    </recommendedName>
    <alternativeName>
        <fullName evidence="4">FTS- and Hook-interacting protein like</fullName>
        <shortName evidence="4">FHIP-L</shortName>
    </alternativeName>
</protein>
<organism>
    <name type="scientific">Homo sapiens</name>
    <name type="common">Human</name>
    <dbReference type="NCBI Taxonomy" id="9606"/>
    <lineage>
        <taxon>Eukaryota</taxon>
        <taxon>Metazoa</taxon>
        <taxon>Chordata</taxon>
        <taxon>Craniata</taxon>
        <taxon>Vertebrata</taxon>
        <taxon>Euteleostomi</taxon>
        <taxon>Mammalia</taxon>
        <taxon>Eutheria</taxon>
        <taxon>Euarchontoglires</taxon>
        <taxon>Primates</taxon>
        <taxon>Haplorrhini</taxon>
        <taxon>Catarrhini</taxon>
        <taxon>Hominidae</taxon>
        <taxon>Homo</taxon>
    </lineage>
</organism>
<reference key="1">
    <citation type="journal article" date="2005" name="Nature">
        <title>Generation and annotation of the DNA sequences of human chromosomes 2 and 4.</title>
        <authorList>
            <person name="Hillier L.W."/>
            <person name="Graves T.A."/>
            <person name="Fulton R.S."/>
            <person name="Fulton L.A."/>
            <person name="Pepin K.H."/>
            <person name="Minx P."/>
            <person name="Wagner-McPherson C."/>
            <person name="Layman D."/>
            <person name="Wylie K."/>
            <person name="Sekhon M."/>
            <person name="Becker M.C."/>
            <person name="Fewell G.A."/>
            <person name="Delehaunty K.D."/>
            <person name="Miner T.L."/>
            <person name="Nash W.E."/>
            <person name="Kremitzki C."/>
            <person name="Oddy L."/>
            <person name="Du H."/>
            <person name="Sun H."/>
            <person name="Bradshaw-Cordum H."/>
            <person name="Ali J."/>
            <person name="Carter J."/>
            <person name="Cordes M."/>
            <person name="Harris A."/>
            <person name="Isak A."/>
            <person name="van Brunt A."/>
            <person name="Nguyen C."/>
            <person name="Du F."/>
            <person name="Courtney L."/>
            <person name="Kalicki J."/>
            <person name="Ozersky P."/>
            <person name="Abbott S."/>
            <person name="Armstrong J."/>
            <person name="Belter E.A."/>
            <person name="Caruso L."/>
            <person name="Cedroni M."/>
            <person name="Cotton M."/>
            <person name="Davidson T."/>
            <person name="Desai A."/>
            <person name="Elliott G."/>
            <person name="Erb T."/>
            <person name="Fronick C."/>
            <person name="Gaige T."/>
            <person name="Haakenson W."/>
            <person name="Haglund K."/>
            <person name="Holmes A."/>
            <person name="Harkins R."/>
            <person name="Kim K."/>
            <person name="Kruchowski S.S."/>
            <person name="Strong C.M."/>
            <person name="Grewal N."/>
            <person name="Goyea E."/>
            <person name="Hou S."/>
            <person name="Levy A."/>
            <person name="Martinka S."/>
            <person name="Mead K."/>
            <person name="McLellan M.D."/>
            <person name="Meyer R."/>
            <person name="Randall-Maher J."/>
            <person name="Tomlinson C."/>
            <person name="Dauphin-Kohlberg S."/>
            <person name="Kozlowicz-Reilly A."/>
            <person name="Shah N."/>
            <person name="Swearengen-Shahid S."/>
            <person name="Snider J."/>
            <person name="Strong J.T."/>
            <person name="Thompson J."/>
            <person name="Yoakum M."/>
            <person name="Leonard S."/>
            <person name="Pearman C."/>
            <person name="Trani L."/>
            <person name="Radionenko M."/>
            <person name="Waligorski J.E."/>
            <person name="Wang C."/>
            <person name="Rock S.M."/>
            <person name="Tin-Wollam A.-M."/>
            <person name="Maupin R."/>
            <person name="Latreille P."/>
            <person name="Wendl M.C."/>
            <person name="Yang S.-P."/>
            <person name="Pohl C."/>
            <person name="Wallis J.W."/>
            <person name="Spieth J."/>
            <person name="Bieri T.A."/>
            <person name="Berkowicz N."/>
            <person name="Nelson J.O."/>
            <person name="Osborne J."/>
            <person name="Ding L."/>
            <person name="Meyer R."/>
            <person name="Sabo A."/>
            <person name="Shotland Y."/>
            <person name="Sinha P."/>
            <person name="Wohldmann P.E."/>
            <person name="Cook L.L."/>
            <person name="Hickenbotham M.T."/>
            <person name="Eldred J."/>
            <person name="Williams D."/>
            <person name="Jones T.A."/>
            <person name="She X."/>
            <person name="Ciccarelli F.D."/>
            <person name="Izaurralde E."/>
            <person name="Taylor J."/>
            <person name="Schmutz J."/>
            <person name="Myers R.M."/>
            <person name="Cox D.R."/>
            <person name="Huang X."/>
            <person name="McPherson J.D."/>
            <person name="Mardis E.R."/>
            <person name="Clifton S.W."/>
            <person name="Warren W.C."/>
            <person name="Chinwalla A.T."/>
            <person name="Eddy S.R."/>
            <person name="Marra M.A."/>
            <person name="Ovcharenko I."/>
            <person name="Furey T.S."/>
            <person name="Miller W."/>
            <person name="Eichler E.E."/>
            <person name="Bork P."/>
            <person name="Suyama M."/>
            <person name="Torrents D."/>
            <person name="Waterston R.H."/>
            <person name="Wilson R.K."/>
        </authorList>
    </citation>
    <scope>NUCLEOTIDE SEQUENCE [LARGE SCALE GENOMIC DNA]</scope>
</reference>
<reference key="2">
    <citation type="journal article" date="2004" name="Nat. Genet.">
        <title>Complete sequencing and characterization of 21,243 full-length human cDNAs.</title>
        <authorList>
            <person name="Ota T."/>
            <person name="Suzuki Y."/>
            <person name="Nishikawa T."/>
            <person name="Otsuki T."/>
            <person name="Sugiyama T."/>
            <person name="Irie R."/>
            <person name="Wakamatsu A."/>
            <person name="Hayashi K."/>
            <person name="Sato H."/>
            <person name="Nagai K."/>
            <person name="Kimura K."/>
            <person name="Makita H."/>
            <person name="Sekine M."/>
            <person name="Obayashi M."/>
            <person name="Nishi T."/>
            <person name="Shibahara T."/>
            <person name="Tanaka T."/>
            <person name="Ishii S."/>
            <person name="Yamamoto J."/>
            <person name="Saito K."/>
            <person name="Kawai Y."/>
            <person name="Isono Y."/>
            <person name="Nakamura Y."/>
            <person name="Nagahari K."/>
            <person name="Murakami K."/>
            <person name="Yasuda T."/>
            <person name="Iwayanagi T."/>
            <person name="Wagatsuma M."/>
            <person name="Shiratori A."/>
            <person name="Sudo H."/>
            <person name="Hosoiri T."/>
            <person name="Kaku Y."/>
            <person name="Kodaira H."/>
            <person name="Kondo H."/>
            <person name="Sugawara M."/>
            <person name="Takahashi M."/>
            <person name="Kanda K."/>
            <person name="Yokoi T."/>
            <person name="Furuya T."/>
            <person name="Kikkawa E."/>
            <person name="Omura Y."/>
            <person name="Abe K."/>
            <person name="Kamihara K."/>
            <person name="Katsuta N."/>
            <person name="Sato K."/>
            <person name="Tanikawa M."/>
            <person name="Yamazaki M."/>
            <person name="Ninomiya K."/>
            <person name="Ishibashi T."/>
            <person name="Yamashita H."/>
            <person name="Murakawa K."/>
            <person name="Fujimori K."/>
            <person name="Tanai H."/>
            <person name="Kimata M."/>
            <person name="Watanabe M."/>
            <person name="Hiraoka S."/>
            <person name="Chiba Y."/>
            <person name="Ishida S."/>
            <person name="Ono Y."/>
            <person name="Takiguchi S."/>
            <person name="Watanabe S."/>
            <person name="Yosida M."/>
            <person name="Hotuta T."/>
            <person name="Kusano J."/>
            <person name="Kanehori K."/>
            <person name="Takahashi-Fujii A."/>
            <person name="Hara H."/>
            <person name="Tanase T.-O."/>
            <person name="Nomura Y."/>
            <person name="Togiya S."/>
            <person name="Komai F."/>
            <person name="Hara R."/>
            <person name="Takeuchi K."/>
            <person name="Arita M."/>
            <person name="Imose N."/>
            <person name="Musashino K."/>
            <person name="Yuuki H."/>
            <person name="Oshima A."/>
            <person name="Sasaki N."/>
            <person name="Aotsuka S."/>
            <person name="Yoshikawa Y."/>
            <person name="Matsunawa H."/>
            <person name="Ichihara T."/>
            <person name="Shiohata N."/>
            <person name="Sano S."/>
            <person name="Moriya S."/>
            <person name="Momiyama H."/>
            <person name="Satoh N."/>
            <person name="Takami S."/>
            <person name="Terashima Y."/>
            <person name="Suzuki O."/>
            <person name="Nakagawa S."/>
            <person name="Senoh A."/>
            <person name="Mizoguchi H."/>
            <person name="Goto Y."/>
            <person name="Shimizu F."/>
            <person name="Wakebe H."/>
            <person name="Hishigaki H."/>
            <person name="Watanabe T."/>
            <person name="Sugiyama A."/>
            <person name="Takemoto M."/>
            <person name="Kawakami B."/>
            <person name="Yamazaki M."/>
            <person name="Watanabe K."/>
            <person name="Kumagai A."/>
            <person name="Itakura S."/>
            <person name="Fukuzumi Y."/>
            <person name="Fujimori Y."/>
            <person name="Komiyama M."/>
            <person name="Tashiro H."/>
            <person name="Tanigami A."/>
            <person name="Fujiwara T."/>
            <person name="Ono T."/>
            <person name="Yamada K."/>
            <person name="Fujii Y."/>
            <person name="Ozaki K."/>
            <person name="Hirao M."/>
            <person name="Ohmori Y."/>
            <person name="Kawabata A."/>
            <person name="Hikiji T."/>
            <person name="Kobatake N."/>
            <person name="Inagaki H."/>
            <person name="Ikema Y."/>
            <person name="Okamoto S."/>
            <person name="Okitani R."/>
            <person name="Kawakami T."/>
            <person name="Noguchi S."/>
            <person name="Itoh T."/>
            <person name="Shigeta K."/>
            <person name="Senba T."/>
            <person name="Matsumura K."/>
            <person name="Nakajima Y."/>
            <person name="Mizuno T."/>
            <person name="Morinaga M."/>
            <person name="Sasaki M."/>
            <person name="Togashi T."/>
            <person name="Oyama M."/>
            <person name="Hata H."/>
            <person name="Watanabe M."/>
            <person name="Komatsu T."/>
            <person name="Mizushima-Sugano J."/>
            <person name="Satoh T."/>
            <person name="Shirai Y."/>
            <person name="Takahashi Y."/>
            <person name="Nakagawa K."/>
            <person name="Okumura K."/>
            <person name="Nagase T."/>
            <person name="Nomura N."/>
            <person name="Kikuchi H."/>
            <person name="Masuho Y."/>
            <person name="Yamashita R."/>
            <person name="Nakai K."/>
            <person name="Yada T."/>
            <person name="Nakamura Y."/>
            <person name="Ohara O."/>
            <person name="Isogai T."/>
            <person name="Sugano S."/>
        </authorList>
    </citation>
    <scope>PARTIAL NUCLEOTIDE SEQUENCE [LARGE SCALE MRNA]</scope>
    <source>
        <tissue>Tongue</tissue>
    </source>
</reference>
<reference key="3">
    <citation type="journal article" date="2004" name="Genome Res.">
        <title>The status, quality, and expansion of the NIH full-length cDNA project: the Mammalian Gene Collection (MGC).</title>
        <authorList>
            <consortium name="The MGC Project Team"/>
        </authorList>
    </citation>
    <scope>NUCLEOTIDE SEQUENCE [LARGE SCALE MRNA] OF 1-794</scope>
    <source>
        <tissue>Skin</tissue>
    </source>
</reference>
<reference key="4">
    <citation type="journal article" date="2020" name="Mol. Biol. Cell">
        <title>The FTS-Hook-FHIP (FHF) complex interacts with AP-4 to mediate perinuclear distribution of AP-4 and its cargo ATG9A.</title>
        <authorList>
            <person name="Mattera R."/>
            <person name="Williamson C.D."/>
            <person name="Ren X."/>
            <person name="Bonifacino J.S."/>
        </authorList>
    </citation>
    <scope>FUNCTION</scope>
    <scope>INTERACTION WITH AKTIP</scope>
</reference>
<reference key="5">
    <citation type="journal article" date="2018" name="Blood Cancer J.">
        <title>Whole exome sequencing identifies recessive germline mutations in FAM160A1 in familial NK/T cell lymphoma.</title>
        <authorList>
            <person name="Chan J.Y."/>
            <person name="Ng A.Y.J."/>
            <person name="Cheng C.L."/>
            <person name="Nairismaegi M.L."/>
            <person name="Venkatesh B."/>
            <person name="Cheah D.M.Z."/>
            <person name="Li S.T."/>
            <person name="Chan S.H."/>
            <person name="Ngeow J."/>
            <person name="Laurensia Y."/>
            <person name="Lim J.Q."/>
            <person name="Pang J.W.L."/>
            <person name="Nagarajan S."/>
            <person name="Song T."/>
            <person name="Chia B."/>
            <person name="Tan J."/>
            <person name="Huang D."/>
            <person name="Goh Y.T."/>
            <person name="Poon E."/>
            <person name="Somasundaram N."/>
            <person name="Tao M."/>
            <person name="Quek R.H.H."/>
            <person name="Farid M."/>
            <person name="Khor C.C."/>
            <person name="Bei J.X."/>
            <person name="Tan S.Y."/>
            <person name="Lim S.T."/>
            <person name="Ong C.K."/>
            <person name="Tang T."/>
        </authorList>
    </citation>
    <scope>VARIANT CYS-943</scope>
</reference>
<feature type="chain" id="PRO_0000319578" description="FHF complex subunit HOOK-interacting protein 1A">
    <location>
        <begin position="1"/>
        <end position="1040"/>
    </location>
</feature>
<feature type="region of interest" description="Disordered" evidence="1">
    <location>
        <begin position="555"/>
        <end position="613"/>
    </location>
</feature>
<feature type="region of interest" description="Disordered" evidence="1">
    <location>
        <begin position="653"/>
        <end position="746"/>
    </location>
</feature>
<feature type="region of interest" description="Disordered" evidence="1">
    <location>
        <begin position="769"/>
        <end position="808"/>
    </location>
</feature>
<feature type="compositionally biased region" description="Basic and acidic residues" evidence="1">
    <location>
        <begin position="653"/>
        <end position="664"/>
    </location>
</feature>
<feature type="compositionally biased region" description="Polar residues" evidence="1">
    <location>
        <begin position="677"/>
        <end position="690"/>
    </location>
</feature>
<feature type="compositionally biased region" description="Basic and acidic residues" evidence="1">
    <location>
        <begin position="696"/>
        <end position="719"/>
    </location>
</feature>
<feature type="compositionally biased region" description="Basic and acidic residues" evidence="1">
    <location>
        <begin position="783"/>
        <end position="804"/>
    </location>
</feature>
<feature type="sequence variant" id="VAR_084431" description="Found in siblings with familial natural-killer/T-cell lymphoma; uncertain significance." evidence="2">
    <original>R</original>
    <variation>C</variation>
    <location>
        <position position="943"/>
    </location>
</feature>